<comment type="function">
    <text evidence="2 3">Catalyzes the asymmetric hydrolysis of diadenosine 5',5'''-P1,P4-tetraphosphate (Ap4A) to yield AMP and ATP (By similarity). Exhibits decapping activity towards FAD-capped RNAs and dpCoA-capped RNAs in vitro (By similarity).</text>
</comment>
<comment type="catalytic activity">
    <reaction evidence="2">
        <text>P(1),P(4)-bis(5'-guanosyl) tetraphosphate + H2O = GMP + GTP + 2 H(+)</text>
        <dbReference type="Rhea" id="RHEA:22484"/>
        <dbReference type="ChEBI" id="CHEBI:15377"/>
        <dbReference type="ChEBI" id="CHEBI:15378"/>
        <dbReference type="ChEBI" id="CHEBI:37565"/>
        <dbReference type="ChEBI" id="CHEBI:57553"/>
        <dbReference type="ChEBI" id="CHEBI:58115"/>
        <dbReference type="EC" id="3.6.1.17"/>
    </reaction>
</comment>
<comment type="catalytic activity">
    <reaction evidence="3">
        <text>a 5'-end CoA-ribonucleoside in mRNA + H2O = a 5'-end phospho-adenosine-phospho-ribonucleoside in mRNA + (R)-4'-phosphopantetheine + 2 H(+)</text>
        <dbReference type="Rhea" id="RHEA:67592"/>
        <dbReference type="Rhea" id="RHEA-COMP:15719"/>
        <dbReference type="Rhea" id="RHEA-COMP:17276"/>
        <dbReference type="ChEBI" id="CHEBI:15377"/>
        <dbReference type="ChEBI" id="CHEBI:15378"/>
        <dbReference type="ChEBI" id="CHEBI:61723"/>
        <dbReference type="ChEBI" id="CHEBI:144051"/>
        <dbReference type="ChEBI" id="CHEBI:172371"/>
    </reaction>
    <physiologicalReaction direction="left-to-right" evidence="3">
        <dbReference type="Rhea" id="RHEA:67593"/>
    </physiologicalReaction>
</comment>
<comment type="catalytic activity">
    <reaction evidence="3">
        <text>a 5'-end FAD-phospho-ribonucleoside in mRNA + H2O = a 5'-end phospho-adenosine-phospho-ribonucleoside in mRNA + FMN + 2 H(+)</text>
        <dbReference type="Rhea" id="RHEA:67588"/>
        <dbReference type="Rhea" id="RHEA-COMP:15719"/>
        <dbReference type="Rhea" id="RHEA-COMP:17275"/>
        <dbReference type="ChEBI" id="CHEBI:15377"/>
        <dbReference type="ChEBI" id="CHEBI:15378"/>
        <dbReference type="ChEBI" id="CHEBI:58210"/>
        <dbReference type="ChEBI" id="CHEBI:144051"/>
        <dbReference type="ChEBI" id="CHEBI:172372"/>
    </reaction>
    <physiologicalReaction direction="left-to-right" evidence="3">
        <dbReference type="Rhea" id="RHEA:67589"/>
    </physiologicalReaction>
</comment>
<comment type="cofactor">
    <cofactor evidence="4">
        <name>a divalent metal cation</name>
        <dbReference type="ChEBI" id="CHEBI:60240"/>
    </cofactor>
    <text evidence="4">Divalent metal ions.</text>
</comment>
<comment type="similarity">
    <text evidence="6">Belongs to the Nudix hydrolase family.</text>
</comment>
<proteinExistence type="evidence at transcript level"/>
<dbReference type="EC" id="3.6.1.17" evidence="2"/>
<dbReference type="EMBL" id="BC114149">
    <property type="protein sequence ID" value="AAI14150.1"/>
    <property type="molecule type" value="mRNA"/>
</dbReference>
<dbReference type="RefSeq" id="NP_001070570.1">
    <property type="nucleotide sequence ID" value="NM_001077102.1"/>
</dbReference>
<dbReference type="RefSeq" id="XP_059745259.1">
    <property type="nucleotide sequence ID" value="XM_059889276.1"/>
</dbReference>
<dbReference type="SMR" id="Q29RJ1"/>
<dbReference type="FunCoup" id="Q29RJ1">
    <property type="interactions" value="1132"/>
</dbReference>
<dbReference type="STRING" id="9913.ENSBTAP00000042493"/>
<dbReference type="PaxDb" id="9913-ENSBTAP00000042493"/>
<dbReference type="GeneID" id="768044"/>
<dbReference type="KEGG" id="bta:768044"/>
<dbReference type="CTD" id="318"/>
<dbReference type="VEuPathDB" id="HostDB:ENSBTAG00000031793"/>
<dbReference type="eggNOG" id="KOG2839">
    <property type="taxonomic scope" value="Eukaryota"/>
</dbReference>
<dbReference type="HOGENOM" id="CLU_037162_14_5_1"/>
<dbReference type="InParanoid" id="Q29RJ1"/>
<dbReference type="OMA" id="WRDYEQA"/>
<dbReference type="OrthoDB" id="276276at2759"/>
<dbReference type="TreeFam" id="TF105958"/>
<dbReference type="Reactome" id="R-BTA-3299685">
    <property type="pathway name" value="Detoxification of Reactive Oxygen Species"/>
</dbReference>
<dbReference type="Proteomes" id="UP000009136">
    <property type="component" value="Chromosome 8"/>
</dbReference>
<dbReference type="Bgee" id="ENSBTAG00000031793">
    <property type="expression patterns" value="Expressed in oocyte and 103 other cell types or tissues"/>
</dbReference>
<dbReference type="GO" id="GO:0004081">
    <property type="term" value="F:bis(5'-nucleosyl)-tetraphosphatase (asymmetrical) activity"/>
    <property type="evidence" value="ECO:0000250"/>
    <property type="project" value="UniProtKB"/>
</dbReference>
<dbReference type="GO" id="GO:0005525">
    <property type="term" value="F:GTP binding"/>
    <property type="evidence" value="ECO:0007669"/>
    <property type="project" value="UniProtKB-KW"/>
</dbReference>
<dbReference type="GO" id="GO:0006167">
    <property type="term" value="P:AMP biosynthetic process"/>
    <property type="evidence" value="ECO:0000318"/>
    <property type="project" value="GO_Central"/>
</dbReference>
<dbReference type="GO" id="GO:0006754">
    <property type="term" value="P:ATP biosynthetic process"/>
    <property type="evidence" value="ECO:0000318"/>
    <property type="project" value="GO_Central"/>
</dbReference>
<dbReference type="CDD" id="cd03428">
    <property type="entry name" value="NUDIX_Ap4A_Nudt2"/>
    <property type="match status" value="1"/>
</dbReference>
<dbReference type="FunFam" id="3.90.79.10:FF:000037">
    <property type="entry name" value="Nudix hydrolase 2"/>
    <property type="match status" value="1"/>
</dbReference>
<dbReference type="Gene3D" id="3.90.79.10">
    <property type="entry name" value="Nucleoside Triphosphate Pyrophosphohydrolase"/>
    <property type="match status" value="1"/>
</dbReference>
<dbReference type="InterPro" id="IPR020476">
    <property type="entry name" value="Nudix_hydrolase"/>
</dbReference>
<dbReference type="InterPro" id="IPR015797">
    <property type="entry name" value="NUDIX_hydrolase-like_dom_sf"/>
</dbReference>
<dbReference type="InterPro" id="IPR020084">
    <property type="entry name" value="NUDIX_hydrolase_CS"/>
</dbReference>
<dbReference type="InterPro" id="IPR000086">
    <property type="entry name" value="NUDIX_hydrolase_dom"/>
</dbReference>
<dbReference type="InterPro" id="IPR051325">
    <property type="entry name" value="Nudix_hydrolase_domain"/>
</dbReference>
<dbReference type="InterPro" id="IPR003565">
    <property type="entry name" value="Tetra_PHTase"/>
</dbReference>
<dbReference type="PANTHER" id="PTHR21340:SF0">
    <property type="entry name" value="BIS(5'-NUCLEOSYL)-TETRAPHOSPHATASE [ASYMMETRICAL]"/>
    <property type="match status" value="1"/>
</dbReference>
<dbReference type="PANTHER" id="PTHR21340">
    <property type="entry name" value="DIADENOSINE 5,5-P1,P4-TETRAPHOSPHATE PYROPHOSPHOHYDROLASE MUTT"/>
    <property type="match status" value="1"/>
</dbReference>
<dbReference type="Pfam" id="PF00293">
    <property type="entry name" value="NUDIX"/>
    <property type="match status" value="1"/>
</dbReference>
<dbReference type="PRINTS" id="PR00502">
    <property type="entry name" value="NUDIXFAMILY"/>
</dbReference>
<dbReference type="PRINTS" id="PR01405">
    <property type="entry name" value="TETRPHPHTASE"/>
</dbReference>
<dbReference type="SUPFAM" id="SSF55811">
    <property type="entry name" value="Nudix"/>
    <property type="match status" value="1"/>
</dbReference>
<dbReference type="PROSITE" id="PS51462">
    <property type="entry name" value="NUDIX"/>
    <property type="match status" value="1"/>
</dbReference>
<dbReference type="PROSITE" id="PS00893">
    <property type="entry name" value="NUDIX_BOX"/>
    <property type="match status" value="1"/>
</dbReference>
<accession>Q29RJ1</accession>
<keyword id="KW-0007">Acetylation</keyword>
<keyword id="KW-0342">GTP-binding</keyword>
<keyword id="KW-0378">Hydrolase</keyword>
<keyword id="KW-0547">Nucleotide-binding</keyword>
<keyword id="KW-1185">Reference proteome</keyword>
<protein>
    <recommendedName>
        <fullName>Bis(5'-nucleosyl)-tetraphosphatase [asymmetrical]</fullName>
        <ecNumber evidence="2">3.6.1.17</ecNumber>
    </recommendedName>
    <alternativeName>
        <fullName>Diadenosine 5',5'''-P1,P4-tetraphosphate asymmetrical hydrolase</fullName>
        <shortName>Ap4A hydrolase</shortName>
        <shortName>Ap4Aase</shortName>
        <shortName>Diadenosine tetraphosphatase</shortName>
    </alternativeName>
    <alternativeName>
        <fullName>Nucleoside diphosphate-linked moiety X motif 2</fullName>
        <shortName>Nudix motif 2</shortName>
    </alternativeName>
</protein>
<gene>
    <name type="primary">NUDT2</name>
</gene>
<sequence>MALRACGLIIFRRRLIPKVDNTAIEFLLLQASDGIHHWTPPKGHVEPGESDLETALRETQEEAGIEAGQLTIIEGFRRELSYVARAKPKIVIYWLAEVKDCDVEVRLSREHQAYRWLELEDACQLAQFEEMKAALQEGHQFLCSTAT</sequence>
<organism>
    <name type="scientific">Bos taurus</name>
    <name type="common">Bovine</name>
    <dbReference type="NCBI Taxonomy" id="9913"/>
    <lineage>
        <taxon>Eukaryota</taxon>
        <taxon>Metazoa</taxon>
        <taxon>Chordata</taxon>
        <taxon>Craniata</taxon>
        <taxon>Vertebrata</taxon>
        <taxon>Euteleostomi</taxon>
        <taxon>Mammalia</taxon>
        <taxon>Eutheria</taxon>
        <taxon>Laurasiatheria</taxon>
        <taxon>Artiodactyla</taxon>
        <taxon>Ruminantia</taxon>
        <taxon>Pecora</taxon>
        <taxon>Bovidae</taxon>
        <taxon>Bovinae</taxon>
        <taxon>Bos</taxon>
    </lineage>
</organism>
<name>AP4A_BOVIN</name>
<feature type="initiator methionine" description="Removed" evidence="1">
    <location>
        <position position="1"/>
    </location>
</feature>
<feature type="chain" id="PRO_0000260767" description="Bis(5'-nucleosyl)-tetraphosphatase [asymmetrical]">
    <location>
        <begin position="2"/>
        <end position="147"/>
    </location>
</feature>
<feature type="domain" description="Nudix hydrolase" evidence="5">
    <location>
        <begin position="2"/>
        <end position="139"/>
    </location>
</feature>
<feature type="short sequence motif" description="Nudix box">
    <location>
        <begin position="43"/>
        <end position="64"/>
    </location>
</feature>
<feature type="modified residue" description="N-acetylalanine" evidence="1">
    <location>
        <position position="2"/>
    </location>
</feature>
<evidence type="ECO:0000250" key="1">
    <source>
        <dbReference type="UniProtKB" id="P50583"/>
    </source>
</evidence>
<evidence type="ECO:0000250" key="2">
    <source>
        <dbReference type="UniProtKB" id="P50584"/>
    </source>
</evidence>
<evidence type="ECO:0000250" key="3">
    <source>
        <dbReference type="UniProtKB" id="P56380"/>
    </source>
</evidence>
<evidence type="ECO:0000250" key="4">
    <source>
        <dbReference type="UniProtKB" id="Q9U2M7"/>
    </source>
</evidence>
<evidence type="ECO:0000255" key="5">
    <source>
        <dbReference type="PROSITE-ProRule" id="PRU00794"/>
    </source>
</evidence>
<evidence type="ECO:0000305" key="6"/>
<reference key="1">
    <citation type="submission" date="2006-02" db="EMBL/GenBank/DDBJ databases">
        <authorList>
            <consortium name="NIH - Mammalian Gene Collection (MGC) project"/>
        </authorList>
    </citation>
    <scope>NUCLEOTIDE SEQUENCE [LARGE SCALE MRNA]</scope>
    <source>
        <strain>Hereford</strain>
        <tissue>Hypothalamus</tissue>
    </source>
</reference>